<comment type="catalytic activity">
    <reaction evidence="1">
        <text>L-arginine + H2O = L-citrulline + NH4(+)</text>
        <dbReference type="Rhea" id="RHEA:19597"/>
        <dbReference type="ChEBI" id="CHEBI:15377"/>
        <dbReference type="ChEBI" id="CHEBI:28938"/>
        <dbReference type="ChEBI" id="CHEBI:32682"/>
        <dbReference type="ChEBI" id="CHEBI:57743"/>
        <dbReference type="EC" id="3.5.3.6"/>
    </reaction>
</comment>
<comment type="pathway">
    <text evidence="1">Amino-acid degradation; L-arginine degradation via ADI pathway; carbamoyl phosphate from L-arginine: step 1/2.</text>
</comment>
<comment type="subcellular location">
    <subcellularLocation>
        <location evidence="1">Cytoplasm</location>
    </subcellularLocation>
</comment>
<comment type="similarity">
    <text evidence="1">Belongs to the arginine deiminase family.</text>
</comment>
<reference key="1">
    <citation type="journal article" date="2004" name="Nucleic Acids Res.">
        <title>Whole genome comparisons of serotype 4b and 1/2a strains of the food-borne pathogen Listeria monocytogenes reveal new insights into the core genome components of this species.</title>
        <authorList>
            <person name="Nelson K.E."/>
            <person name="Fouts D.E."/>
            <person name="Mongodin E.F."/>
            <person name="Ravel J."/>
            <person name="DeBoy R.T."/>
            <person name="Kolonay J.F."/>
            <person name="Rasko D.A."/>
            <person name="Angiuoli S.V."/>
            <person name="Gill S.R."/>
            <person name="Paulsen I.T."/>
            <person name="Peterson J.D."/>
            <person name="White O."/>
            <person name="Nelson W.C."/>
            <person name="Nierman W.C."/>
            <person name="Beanan M.J."/>
            <person name="Brinkac L.M."/>
            <person name="Daugherty S.C."/>
            <person name="Dodson R.J."/>
            <person name="Durkin A.S."/>
            <person name="Madupu R."/>
            <person name="Haft D.H."/>
            <person name="Selengut J."/>
            <person name="Van Aken S.E."/>
            <person name="Khouri H.M."/>
            <person name="Fedorova N."/>
            <person name="Forberger H.A."/>
            <person name="Tran B."/>
            <person name="Kathariou S."/>
            <person name="Wonderling L.D."/>
            <person name="Uhlich G.A."/>
            <person name="Bayles D.O."/>
            <person name="Luchansky J.B."/>
            <person name="Fraser C.M."/>
        </authorList>
    </citation>
    <scope>NUCLEOTIDE SEQUENCE [LARGE SCALE GENOMIC DNA]</scope>
    <source>
        <strain>F2365</strain>
    </source>
</reference>
<name>ARCA_LISMF</name>
<accession>Q725C1</accession>
<feature type="chain" id="PRO_0000182217" description="Arginine deiminase">
    <location>
        <begin position="1"/>
        <end position="410"/>
    </location>
</feature>
<feature type="active site" description="Amidino-cysteine intermediate" evidence="1">
    <location>
        <position position="399"/>
    </location>
</feature>
<keyword id="KW-0056">Arginine metabolism</keyword>
<keyword id="KW-0963">Cytoplasm</keyword>
<keyword id="KW-0378">Hydrolase</keyword>
<dbReference type="EC" id="3.5.3.6" evidence="1"/>
<dbReference type="EMBL" id="AE017262">
    <property type="protein sequence ID" value="AAT02840.1"/>
    <property type="molecule type" value="Genomic_DNA"/>
</dbReference>
<dbReference type="RefSeq" id="WP_003743334.1">
    <property type="nucleotide sequence ID" value="NC_002973.6"/>
</dbReference>
<dbReference type="SMR" id="Q725C1"/>
<dbReference type="KEGG" id="lmf:LMOf2365_0052"/>
<dbReference type="HOGENOM" id="CLU_052662_0_1_9"/>
<dbReference type="UniPathway" id="UPA00254">
    <property type="reaction ID" value="UER00364"/>
</dbReference>
<dbReference type="GO" id="GO:0005737">
    <property type="term" value="C:cytoplasm"/>
    <property type="evidence" value="ECO:0007669"/>
    <property type="project" value="UniProtKB-SubCell"/>
</dbReference>
<dbReference type="GO" id="GO:0016990">
    <property type="term" value="F:arginine deiminase activity"/>
    <property type="evidence" value="ECO:0007669"/>
    <property type="project" value="UniProtKB-UniRule"/>
</dbReference>
<dbReference type="GO" id="GO:0019547">
    <property type="term" value="P:arginine catabolic process to ornithine"/>
    <property type="evidence" value="ECO:0007669"/>
    <property type="project" value="UniProtKB-UniRule"/>
</dbReference>
<dbReference type="GO" id="GO:0019546">
    <property type="term" value="P:arginine deiminase pathway"/>
    <property type="evidence" value="ECO:0007669"/>
    <property type="project" value="TreeGrafter"/>
</dbReference>
<dbReference type="Gene3D" id="1.10.3930.10">
    <property type="entry name" value="Arginine deiminase"/>
    <property type="match status" value="1"/>
</dbReference>
<dbReference type="Gene3D" id="3.75.10.10">
    <property type="entry name" value="L-arginine/glycine Amidinotransferase, Chain A"/>
    <property type="match status" value="1"/>
</dbReference>
<dbReference type="HAMAP" id="MF_00242">
    <property type="entry name" value="Arg_deiminase"/>
    <property type="match status" value="1"/>
</dbReference>
<dbReference type="InterPro" id="IPR003876">
    <property type="entry name" value="Arg_deiminase"/>
</dbReference>
<dbReference type="NCBIfam" id="TIGR01078">
    <property type="entry name" value="arcA"/>
    <property type="match status" value="1"/>
</dbReference>
<dbReference type="NCBIfam" id="NF002381">
    <property type="entry name" value="PRK01388.1"/>
    <property type="match status" value="1"/>
</dbReference>
<dbReference type="PANTHER" id="PTHR47271">
    <property type="entry name" value="ARGININE DEIMINASE"/>
    <property type="match status" value="1"/>
</dbReference>
<dbReference type="PANTHER" id="PTHR47271:SF2">
    <property type="entry name" value="ARGININE DEIMINASE"/>
    <property type="match status" value="1"/>
</dbReference>
<dbReference type="Pfam" id="PF02274">
    <property type="entry name" value="ADI"/>
    <property type="match status" value="1"/>
</dbReference>
<dbReference type="PIRSF" id="PIRSF006356">
    <property type="entry name" value="Arg_deiminase"/>
    <property type="match status" value="1"/>
</dbReference>
<dbReference type="PRINTS" id="PR01466">
    <property type="entry name" value="ARGDEIMINASE"/>
</dbReference>
<dbReference type="SUPFAM" id="SSF55909">
    <property type="entry name" value="Pentein"/>
    <property type="match status" value="1"/>
</dbReference>
<gene>
    <name evidence="1" type="primary">arcA</name>
    <name type="ordered locus">LMOf2365_0052</name>
</gene>
<protein>
    <recommendedName>
        <fullName evidence="1">Arginine deiminase</fullName>
        <shortName evidence="1">ADI</shortName>
        <ecNumber evidence="1">3.5.3.6</ecNumber>
    </recommendedName>
    <alternativeName>
        <fullName evidence="1">Arginine dihydrolase</fullName>
        <shortName evidence="1">AD</shortName>
    </alternativeName>
</protein>
<evidence type="ECO:0000255" key="1">
    <source>
        <dbReference type="HAMAP-Rule" id="MF_00242"/>
    </source>
</evidence>
<organism>
    <name type="scientific">Listeria monocytogenes serotype 4b (strain F2365)</name>
    <dbReference type="NCBI Taxonomy" id="265669"/>
    <lineage>
        <taxon>Bacteria</taxon>
        <taxon>Bacillati</taxon>
        <taxon>Bacillota</taxon>
        <taxon>Bacilli</taxon>
        <taxon>Bacillales</taxon>
        <taxon>Listeriaceae</taxon>
        <taxon>Listeria</taxon>
    </lineage>
</organism>
<proteinExistence type="inferred from homology"/>
<sequence>MKMEQALNITSEIGKLQTVLVKRPGSELENITPEYLESLLFDDIPYLKMMQKEHDFFAKTMKDSNIEVLYLEKLAAEALREANNKESFLTKMIKESNQMDESALYVRDYLMSFDEEEMIRKLMSGLKKSEIPERKKKHLNEMMDEQYPFFLDPLPNLYFTRDPAAVIGNGVTINRMFQPARRRESMFIELILKHHPRFSNQEIPVWSGRGEPFSLEGGDELVLNEETVLVGVSERTDARAVERLAESLFSRSPKIKRVLAVEIPETRSFMHLDTVFTMVNFAQFTIHPAIQNQQGELNIYILEKSENGLEITPRRDFQRVIAEVLDEPEIDFIPCGGEDVIVSAREQWNDGANTLAIAPGEVITYDRNQVSNDLLRSAGIKVHEVISSELSRGRGGPRCMTMPLVRENLK</sequence>